<evidence type="ECO:0000250" key="1"/>
<evidence type="ECO:0000255" key="2">
    <source>
        <dbReference type="HAMAP-Rule" id="MF_01057"/>
    </source>
</evidence>
<organism>
    <name type="scientific">Lactobacillus gasseri (strain ATCC 33323 / DSM 20243 / BCRC 14619 / CIP 102991 / JCM 1131 / KCTC 3163 / NCIMB 11718 / NCTC 13722 / AM63)</name>
    <dbReference type="NCBI Taxonomy" id="324831"/>
    <lineage>
        <taxon>Bacteria</taxon>
        <taxon>Bacillati</taxon>
        <taxon>Bacillota</taxon>
        <taxon>Bacilli</taxon>
        <taxon>Lactobacillales</taxon>
        <taxon>Lactobacillaceae</taxon>
        <taxon>Lactobacillus</taxon>
    </lineage>
</organism>
<keyword id="KW-0489">Methyltransferase</keyword>
<keyword id="KW-0949">S-adenosyl-L-methionine</keyword>
<keyword id="KW-0808">Transferase</keyword>
<keyword id="KW-0819">tRNA processing</keyword>
<dbReference type="EC" id="2.1.1.33" evidence="2"/>
<dbReference type="EMBL" id="CP000413">
    <property type="protein sequence ID" value="ABJ60800.1"/>
    <property type="molecule type" value="Genomic_DNA"/>
</dbReference>
<dbReference type="RefSeq" id="WP_003646890.1">
    <property type="nucleotide sequence ID" value="NZ_WBMG01000003.1"/>
</dbReference>
<dbReference type="SMR" id="Q041S2"/>
<dbReference type="GeneID" id="29638692"/>
<dbReference type="KEGG" id="lga:LGAS_1441"/>
<dbReference type="HOGENOM" id="CLU_050910_2_1_9"/>
<dbReference type="BioCyc" id="LGAS324831:G1G6Y-1433-MONOMER"/>
<dbReference type="UniPathway" id="UPA00989"/>
<dbReference type="Proteomes" id="UP000000664">
    <property type="component" value="Chromosome"/>
</dbReference>
<dbReference type="GO" id="GO:0043527">
    <property type="term" value="C:tRNA methyltransferase complex"/>
    <property type="evidence" value="ECO:0007669"/>
    <property type="project" value="TreeGrafter"/>
</dbReference>
<dbReference type="GO" id="GO:0008176">
    <property type="term" value="F:tRNA (guanine(46)-N7)-methyltransferase activity"/>
    <property type="evidence" value="ECO:0007669"/>
    <property type="project" value="UniProtKB-UniRule"/>
</dbReference>
<dbReference type="CDD" id="cd02440">
    <property type="entry name" value="AdoMet_MTases"/>
    <property type="match status" value="1"/>
</dbReference>
<dbReference type="FunFam" id="3.40.50.150:FF:000035">
    <property type="entry name" value="tRNA (guanine-N(7)-)-methyltransferase"/>
    <property type="match status" value="1"/>
</dbReference>
<dbReference type="Gene3D" id="3.40.50.150">
    <property type="entry name" value="Vaccinia Virus protein VP39"/>
    <property type="match status" value="1"/>
</dbReference>
<dbReference type="HAMAP" id="MF_01057">
    <property type="entry name" value="tRNA_methyltr_TrmB"/>
    <property type="match status" value="1"/>
</dbReference>
<dbReference type="InterPro" id="IPR029063">
    <property type="entry name" value="SAM-dependent_MTases_sf"/>
</dbReference>
<dbReference type="InterPro" id="IPR003358">
    <property type="entry name" value="tRNA_(Gua-N-7)_MeTrfase_Trmb"/>
</dbReference>
<dbReference type="InterPro" id="IPR055361">
    <property type="entry name" value="tRNA_methyltr_TrmB_bact"/>
</dbReference>
<dbReference type="NCBIfam" id="NF001080">
    <property type="entry name" value="PRK00121.2-2"/>
    <property type="match status" value="1"/>
</dbReference>
<dbReference type="NCBIfam" id="TIGR00091">
    <property type="entry name" value="tRNA (guanosine(46)-N7)-methyltransferase TrmB"/>
    <property type="match status" value="1"/>
</dbReference>
<dbReference type="PANTHER" id="PTHR23417">
    <property type="entry name" value="3-DEOXY-D-MANNO-OCTULOSONIC-ACID TRANSFERASE/TRNA GUANINE-N 7 - -METHYLTRANSFERASE"/>
    <property type="match status" value="1"/>
</dbReference>
<dbReference type="PANTHER" id="PTHR23417:SF14">
    <property type="entry name" value="PENTACOTRIPEPTIDE-REPEAT REGION OF PRORP DOMAIN-CONTAINING PROTEIN"/>
    <property type="match status" value="1"/>
</dbReference>
<dbReference type="Pfam" id="PF02390">
    <property type="entry name" value="Methyltransf_4"/>
    <property type="match status" value="1"/>
</dbReference>
<dbReference type="SUPFAM" id="SSF53335">
    <property type="entry name" value="S-adenosyl-L-methionine-dependent methyltransferases"/>
    <property type="match status" value="1"/>
</dbReference>
<dbReference type="PROSITE" id="PS51625">
    <property type="entry name" value="SAM_MT_TRMB"/>
    <property type="match status" value="1"/>
</dbReference>
<proteinExistence type="inferred from homology"/>
<accession>Q041S2</accession>
<sequence>MRLRNKPWAQKLVVEHPEAILNEPDPEKKINWEERFDDFSKPLAIEIGSGKGQFITTLAKKHPEMNFIGVELQTTAAGMILRTKLEEKIDNLQLMCADAANIAMYLPENSVDVVYLNFSDPWPKTRHEKRRLTYKSFLDKYRQILKPEGHLEFKTDNQGLFEYSLVSLNNYGMKFDYVSLDLHHAENEILERNVETEYEHKFAAKGNPIYCLHAHFE</sequence>
<protein>
    <recommendedName>
        <fullName evidence="2">tRNA (guanine-N(7)-)-methyltransferase</fullName>
        <ecNumber evidence="2">2.1.1.33</ecNumber>
    </recommendedName>
    <alternativeName>
        <fullName evidence="2">tRNA (guanine(46)-N(7))-methyltransferase</fullName>
    </alternativeName>
    <alternativeName>
        <fullName evidence="2">tRNA(m7G46)-methyltransferase</fullName>
    </alternativeName>
</protein>
<comment type="function">
    <text evidence="2">Catalyzes the formation of N(7)-methylguanine at position 46 (m7G46) in tRNA.</text>
</comment>
<comment type="catalytic activity">
    <reaction evidence="2">
        <text>guanosine(46) in tRNA + S-adenosyl-L-methionine = N(7)-methylguanosine(46) in tRNA + S-adenosyl-L-homocysteine</text>
        <dbReference type="Rhea" id="RHEA:42708"/>
        <dbReference type="Rhea" id="RHEA-COMP:10188"/>
        <dbReference type="Rhea" id="RHEA-COMP:10189"/>
        <dbReference type="ChEBI" id="CHEBI:57856"/>
        <dbReference type="ChEBI" id="CHEBI:59789"/>
        <dbReference type="ChEBI" id="CHEBI:74269"/>
        <dbReference type="ChEBI" id="CHEBI:74480"/>
        <dbReference type="EC" id="2.1.1.33"/>
    </reaction>
</comment>
<comment type="pathway">
    <text evidence="2">tRNA modification; N(7)-methylguanine-tRNA biosynthesis.</text>
</comment>
<comment type="similarity">
    <text evidence="2">Belongs to the class I-like SAM-binding methyltransferase superfamily. TrmB family.</text>
</comment>
<feature type="chain" id="PRO_0000288165" description="tRNA (guanine-N(7)-)-methyltransferase">
    <location>
        <begin position="1"/>
        <end position="217"/>
    </location>
</feature>
<feature type="region of interest" description="Interaction with RNA" evidence="2">
    <location>
        <begin position="126"/>
        <end position="131"/>
    </location>
</feature>
<feature type="active site" evidence="1">
    <location>
        <position position="120"/>
    </location>
</feature>
<feature type="binding site" evidence="2">
    <location>
        <position position="46"/>
    </location>
    <ligand>
        <name>S-adenosyl-L-methionine</name>
        <dbReference type="ChEBI" id="CHEBI:59789"/>
    </ligand>
</feature>
<feature type="binding site" evidence="2">
    <location>
        <position position="71"/>
    </location>
    <ligand>
        <name>S-adenosyl-L-methionine</name>
        <dbReference type="ChEBI" id="CHEBI:59789"/>
    </ligand>
</feature>
<feature type="binding site" evidence="2">
    <location>
        <position position="98"/>
    </location>
    <ligand>
        <name>S-adenosyl-L-methionine</name>
        <dbReference type="ChEBI" id="CHEBI:59789"/>
    </ligand>
</feature>
<feature type="binding site" evidence="2">
    <location>
        <position position="120"/>
    </location>
    <ligand>
        <name>S-adenosyl-L-methionine</name>
        <dbReference type="ChEBI" id="CHEBI:59789"/>
    </ligand>
</feature>
<feature type="binding site" evidence="2">
    <location>
        <position position="124"/>
    </location>
    <ligand>
        <name>substrate</name>
    </ligand>
</feature>
<feature type="binding site" evidence="2">
    <location>
        <position position="156"/>
    </location>
    <ligand>
        <name>substrate</name>
    </ligand>
</feature>
<feature type="binding site" evidence="2">
    <location>
        <begin position="196"/>
        <end position="199"/>
    </location>
    <ligand>
        <name>substrate</name>
    </ligand>
</feature>
<reference key="1">
    <citation type="journal article" date="2006" name="Proc. Natl. Acad. Sci. U.S.A.">
        <title>Comparative genomics of the lactic acid bacteria.</title>
        <authorList>
            <person name="Makarova K.S."/>
            <person name="Slesarev A."/>
            <person name="Wolf Y.I."/>
            <person name="Sorokin A."/>
            <person name="Mirkin B."/>
            <person name="Koonin E.V."/>
            <person name="Pavlov A."/>
            <person name="Pavlova N."/>
            <person name="Karamychev V."/>
            <person name="Polouchine N."/>
            <person name="Shakhova V."/>
            <person name="Grigoriev I."/>
            <person name="Lou Y."/>
            <person name="Rohksar D."/>
            <person name="Lucas S."/>
            <person name="Huang K."/>
            <person name="Goodstein D.M."/>
            <person name="Hawkins T."/>
            <person name="Plengvidhya V."/>
            <person name="Welker D."/>
            <person name="Hughes J."/>
            <person name="Goh Y."/>
            <person name="Benson A."/>
            <person name="Baldwin K."/>
            <person name="Lee J.-H."/>
            <person name="Diaz-Muniz I."/>
            <person name="Dosti B."/>
            <person name="Smeianov V."/>
            <person name="Wechter W."/>
            <person name="Barabote R."/>
            <person name="Lorca G."/>
            <person name="Altermann E."/>
            <person name="Barrangou R."/>
            <person name="Ganesan B."/>
            <person name="Xie Y."/>
            <person name="Rawsthorne H."/>
            <person name="Tamir D."/>
            <person name="Parker C."/>
            <person name="Breidt F."/>
            <person name="Broadbent J.R."/>
            <person name="Hutkins R."/>
            <person name="O'Sullivan D."/>
            <person name="Steele J."/>
            <person name="Unlu G."/>
            <person name="Saier M.H. Jr."/>
            <person name="Klaenhammer T."/>
            <person name="Richardson P."/>
            <person name="Kozyavkin S."/>
            <person name="Weimer B.C."/>
            <person name="Mills D.A."/>
        </authorList>
    </citation>
    <scope>NUCLEOTIDE SEQUENCE [LARGE SCALE GENOMIC DNA]</scope>
    <source>
        <strain>ATCC 33323 / DSM 20243 / BCRC 14619 / CIP 102991 / JCM 1131 / KCTC 3163 / NCIMB 11718 / NCTC 13722 / AM63</strain>
    </source>
</reference>
<name>TRMB_LACGA</name>
<gene>
    <name evidence="2" type="primary">trmB</name>
    <name type="ordered locus">LGAS_1441</name>
</gene>